<organism>
    <name type="scientific">Burkholderia cenocepacia (strain ATCC BAA-245 / DSM 16553 / LMG 16656 / NCTC 13227 / J2315 / CF5610)</name>
    <name type="common">Burkholderia cepacia (strain J2315)</name>
    <dbReference type="NCBI Taxonomy" id="216591"/>
    <lineage>
        <taxon>Bacteria</taxon>
        <taxon>Pseudomonadati</taxon>
        <taxon>Pseudomonadota</taxon>
        <taxon>Betaproteobacteria</taxon>
        <taxon>Burkholderiales</taxon>
        <taxon>Burkholderiaceae</taxon>
        <taxon>Burkholderia</taxon>
        <taxon>Burkholderia cepacia complex</taxon>
    </lineage>
</organism>
<name>CLPX_BURCJ</name>
<accession>B4EBM2</accession>
<proteinExistence type="inferred from homology"/>
<evidence type="ECO:0000255" key="1">
    <source>
        <dbReference type="HAMAP-Rule" id="MF_00175"/>
    </source>
</evidence>
<evidence type="ECO:0000255" key="2">
    <source>
        <dbReference type="PROSITE-ProRule" id="PRU01250"/>
    </source>
</evidence>
<feature type="chain" id="PRO_1000097929" description="ATP-dependent Clp protease ATP-binding subunit ClpX">
    <location>
        <begin position="1"/>
        <end position="423"/>
    </location>
</feature>
<feature type="domain" description="ClpX-type ZB" evidence="2">
    <location>
        <begin position="3"/>
        <end position="56"/>
    </location>
</feature>
<feature type="binding site" evidence="2">
    <location>
        <position position="15"/>
    </location>
    <ligand>
        <name>Zn(2+)</name>
        <dbReference type="ChEBI" id="CHEBI:29105"/>
    </ligand>
</feature>
<feature type="binding site" evidence="2">
    <location>
        <position position="18"/>
    </location>
    <ligand>
        <name>Zn(2+)</name>
        <dbReference type="ChEBI" id="CHEBI:29105"/>
    </ligand>
</feature>
<feature type="binding site" evidence="2">
    <location>
        <position position="37"/>
    </location>
    <ligand>
        <name>Zn(2+)</name>
        <dbReference type="ChEBI" id="CHEBI:29105"/>
    </ligand>
</feature>
<feature type="binding site" evidence="2">
    <location>
        <position position="40"/>
    </location>
    <ligand>
        <name>Zn(2+)</name>
        <dbReference type="ChEBI" id="CHEBI:29105"/>
    </ligand>
</feature>
<feature type="binding site" evidence="1">
    <location>
        <begin position="122"/>
        <end position="129"/>
    </location>
    <ligand>
        <name>ATP</name>
        <dbReference type="ChEBI" id="CHEBI:30616"/>
    </ligand>
</feature>
<keyword id="KW-0067">ATP-binding</keyword>
<keyword id="KW-0143">Chaperone</keyword>
<keyword id="KW-0479">Metal-binding</keyword>
<keyword id="KW-0547">Nucleotide-binding</keyword>
<keyword id="KW-0862">Zinc</keyword>
<comment type="function">
    <text evidence="1">ATP-dependent specificity component of the Clp protease. It directs the protease to specific substrates. Can perform chaperone functions in the absence of ClpP.</text>
</comment>
<comment type="subunit">
    <text evidence="1">Component of the ClpX-ClpP complex. Forms a hexameric ring that, in the presence of ATP, binds to fourteen ClpP subunits assembled into a disk-like structure with a central cavity, resembling the structure of eukaryotic proteasomes.</text>
</comment>
<comment type="similarity">
    <text evidence="1">Belongs to the ClpX chaperone family.</text>
</comment>
<sequence>MADKKGSNSEKLLYCSFCGKSQHEVKKLIAGPSVFICDECIDLCNEIIRDEAAAAGVEASLSRSDLPSPQEIRDILDQYVIGQERAKKILAVAVYNHYKRLKHLDKKDDVELSKSNILLIGPTGSGKTLLAQTLARLLNVPFVIADATTLTEAGYVGEDVENIIQKLLQNCNYEVDKAQRGIVYIDEIDKISRKSDNPSITRDVSGEGVQQALLKLVEGTMASVPPQGGRKHPNQDFIQVDTTNILFICGGAFDGLEKVITDRTEKTGIGFGATVKSKQERDAGEVLRETEPEDLIKFGLIPELIGRLPVVATLGKLDEAALMKILVEPKNALVKQYHKLFAMERVELEIRPGALQAVARKAIRRKTGARGLRSIIEQALLDVMYELPTMKGVSKVIIDENVIDGDGKPLLIYEDTPKVAGSN</sequence>
<protein>
    <recommendedName>
        <fullName evidence="1">ATP-dependent Clp protease ATP-binding subunit ClpX</fullName>
    </recommendedName>
</protein>
<gene>
    <name evidence="1" type="primary">clpX</name>
    <name type="ordered locus">BceJ2315_19580</name>
    <name type="ORF">BCAL1995</name>
</gene>
<dbReference type="EMBL" id="AM747720">
    <property type="protein sequence ID" value="CAR52295.1"/>
    <property type="molecule type" value="Genomic_DNA"/>
</dbReference>
<dbReference type="RefSeq" id="WP_006489345.1">
    <property type="nucleotide sequence ID" value="NC_011000.1"/>
</dbReference>
<dbReference type="SMR" id="B4EBM2"/>
<dbReference type="GeneID" id="98105550"/>
<dbReference type="KEGG" id="bcj:BCAL1995"/>
<dbReference type="eggNOG" id="COG1219">
    <property type="taxonomic scope" value="Bacteria"/>
</dbReference>
<dbReference type="HOGENOM" id="CLU_014218_8_2_4"/>
<dbReference type="BioCyc" id="BCEN216591:G1G1V-2190-MONOMER"/>
<dbReference type="Proteomes" id="UP000001035">
    <property type="component" value="Chromosome 1"/>
</dbReference>
<dbReference type="GO" id="GO:0009376">
    <property type="term" value="C:HslUV protease complex"/>
    <property type="evidence" value="ECO:0007669"/>
    <property type="project" value="TreeGrafter"/>
</dbReference>
<dbReference type="GO" id="GO:0005524">
    <property type="term" value="F:ATP binding"/>
    <property type="evidence" value="ECO:0007669"/>
    <property type="project" value="UniProtKB-UniRule"/>
</dbReference>
<dbReference type="GO" id="GO:0016887">
    <property type="term" value="F:ATP hydrolysis activity"/>
    <property type="evidence" value="ECO:0007669"/>
    <property type="project" value="InterPro"/>
</dbReference>
<dbReference type="GO" id="GO:0140662">
    <property type="term" value="F:ATP-dependent protein folding chaperone"/>
    <property type="evidence" value="ECO:0007669"/>
    <property type="project" value="InterPro"/>
</dbReference>
<dbReference type="GO" id="GO:0046983">
    <property type="term" value="F:protein dimerization activity"/>
    <property type="evidence" value="ECO:0007669"/>
    <property type="project" value="InterPro"/>
</dbReference>
<dbReference type="GO" id="GO:0051082">
    <property type="term" value="F:unfolded protein binding"/>
    <property type="evidence" value="ECO:0007669"/>
    <property type="project" value="UniProtKB-UniRule"/>
</dbReference>
<dbReference type="GO" id="GO:0008270">
    <property type="term" value="F:zinc ion binding"/>
    <property type="evidence" value="ECO:0007669"/>
    <property type="project" value="InterPro"/>
</dbReference>
<dbReference type="GO" id="GO:0051301">
    <property type="term" value="P:cell division"/>
    <property type="evidence" value="ECO:0007669"/>
    <property type="project" value="TreeGrafter"/>
</dbReference>
<dbReference type="GO" id="GO:0051603">
    <property type="term" value="P:proteolysis involved in protein catabolic process"/>
    <property type="evidence" value="ECO:0007669"/>
    <property type="project" value="TreeGrafter"/>
</dbReference>
<dbReference type="CDD" id="cd19497">
    <property type="entry name" value="RecA-like_ClpX"/>
    <property type="match status" value="1"/>
</dbReference>
<dbReference type="FunFam" id="1.10.8.60:FF:000002">
    <property type="entry name" value="ATP-dependent Clp protease ATP-binding subunit ClpX"/>
    <property type="match status" value="1"/>
</dbReference>
<dbReference type="FunFam" id="3.40.50.300:FF:000005">
    <property type="entry name" value="ATP-dependent Clp protease ATP-binding subunit ClpX"/>
    <property type="match status" value="1"/>
</dbReference>
<dbReference type="Gene3D" id="1.10.8.60">
    <property type="match status" value="1"/>
</dbReference>
<dbReference type="Gene3D" id="6.20.220.10">
    <property type="entry name" value="ClpX chaperone, C4-type zinc finger domain"/>
    <property type="match status" value="1"/>
</dbReference>
<dbReference type="Gene3D" id="3.40.50.300">
    <property type="entry name" value="P-loop containing nucleotide triphosphate hydrolases"/>
    <property type="match status" value="1"/>
</dbReference>
<dbReference type="HAMAP" id="MF_00175">
    <property type="entry name" value="ClpX"/>
    <property type="match status" value="1"/>
</dbReference>
<dbReference type="InterPro" id="IPR003593">
    <property type="entry name" value="AAA+_ATPase"/>
</dbReference>
<dbReference type="InterPro" id="IPR050052">
    <property type="entry name" value="ATP-dep_Clp_protease_ClpX"/>
</dbReference>
<dbReference type="InterPro" id="IPR003959">
    <property type="entry name" value="ATPase_AAA_core"/>
</dbReference>
<dbReference type="InterPro" id="IPR019489">
    <property type="entry name" value="Clp_ATPase_C"/>
</dbReference>
<dbReference type="InterPro" id="IPR004487">
    <property type="entry name" value="Clp_protease_ATP-bd_su_ClpX"/>
</dbReference>
<dbReference type="InterPro" id="IPR046425">
    <property type="entry name" value="ClpX_bact"/>
</dbReference>
<dbReference type="InterPro" id="IPR027417">
    <property type="entry name" value="P-loop_NTPase"/>
</dbReference>
<dbReference type="InterPro" id="IPR010603">
    <property type="entry name" value="Znf_CppX_C4"/>
</dbReference>
<dbReference type="InterPro" id="IPR038366">
    <property type="entry name" value="Znf_CppX_C4_sf"/>
</dbReference>
<dbReference type="NCBIfam" id="TIGR00382">
    <property type="entry name" value="clpX"/>
    <property type="match status" value="1"/>
</dbReference>
<dbReference type="NCBIfam" id="NF003745">
    <property type="entry name" value="PRK05342.1"/>
    <property type="match status" value="1"/>
</dbReference>
<dbReference type="PANTHER" id="PTHR48102:SF7">
    <property type="entry name" value="ATP-DEPENDENT CLP PROTEASE ATP-BINDING SUBUNIT CLPX-LIKE, MITOCHONDRIAL"/>
    <property type="match status" value="1"/>
</dbReference>
<dbReference type="PANTHER" id="PTHR48102">
    <property type="entry name" value="ATP-DEPENDENT CLP PROTEASE ATP-BINDING SUBUNIT CLPX-LIKE, MITOCHONDRIAL-RELATED"/>
    <property type="match status" value="1"/>
</dbReference>
<dbReference type="Pfam" id="PF07724">
    <property type="entry name" value="AAA_2"/>
    <property type="match status" value="1"/>
</dbReference>
<dbReference type="Pfam" id="PF10431">
    <property type="entry name" value="ClpB_D2-small"/>
    <property type="match status" value="1"/>
</dbReference>
<dbReference type="Pfam" id="PF06689">
    <property type="entry name" value="zf-C4_ClpX"/>
    <property type="match status" value="1"/>
</dbReference>
<dbReference type="SMART" id="SM00382">
    <property type="entry name" value="AAA"/>
    <property type="match status" value="1"/>
</dbReference>
<dbReference type="SMART" id="SM01086">
    <property type="entry name" value="ClpB_D2-small"/>
    <property type="match status" value="1"/>
</dbReference>
<dbReference type="SMART" id="SM00994">
    <property type="entry name" value="zf-C4_ClpX"/>
    <property type="match status" value="1"/>
</dbReference>
<dbReference type="SUPFAM" id="SSF57716">
    <property type="entry name" value="Glucocorticoid receptor-like (DNA-binding domain)"/>
    <property type="match status" value="1"/>
</dbReference>
<dbReference type="SUPFAM" id="SSF52540">
    <property type="entry name" value="P-loop containing nucleoside triphosphate hydrolases"/>
    <property type="match status" value="1"/>
</dbReference>
<dbReference type="PROSITE" id="PS51902">
    <property type="entry name" value="CLPX_ZB"/>
    <property type="match status" value="1"/>
</dbReference>
<reference key="1">
    <citation type="journal article" date="2009" name="J. Bacteriol.">
        <title>The genome of Burkholderia cenocepacia J2315, an epidemic pathogen of cystic fibrosis patients.</title>
        <authorList>
            <person name="Holden M.T."/>
            <person name="Seth-Smith H.M."/>
            <person name="Crossman L.C."/>
            <person name="Sebaihia M."/>
            <person name="Bentley S.D."/>
            <person name="Cerdeno-Tarraga A.M."/>
            <person name="Thomson N.R."/>
            <person name="Bason N."/>
            <person name="Quail M.A."/>
            <person name="Sharp S."/>
            <person name="Cherevach I."/>
            <person name="Churcher C."/>
            <person name="Goodhead I."/>
            <person name="Hauser H."/>
            <person name="Holroyd N."/>
            <person name="Mungall K."/>
            <person name="Scott P."/>
            <person name="Walker D."/>
            <person name="White B."/>
            <person name="Rose H."/>
            <person name="Iversen P."/>
            <person name="Mil-Homens D."/>
            <person name="Rocha E.P."/>
            <person name="Fialho A.M."/>
            <person name="Baldwin A."/>
            <person name="Dowson C."/>
            <person name="Barrell B.G."/>
            <person name="Govan J.R."/>
            <person name="Vandamme P."/>
            <person name="Hart C.A."/>
            <person name="Mahenthiralingam E."/>
            <person name="Parkhill J."/>
        </authorList>
    </citation>
    <scope>NUCLEOTIDE SEQUENCE [LARGE SCALE GENOMIC DNA]</scope>
    <source>
        <strain>ATCC BAA-245 / DSM 16553 / LMG 16656 / NCTC 13227 / J2315 / CF5610</strain>
    </source>
</reference>